<accession>B5FPN2</accession>
<reference key="1">
    <citation type="journal article" date="2011" name="J. Bacteriol.">
        <title>Comparative genomics of 28 Salmonella enterica isolates: evidence for CRISPR-mediated adaptive sublineage evolution.</title>
        <authorList>
            <person name="Fricke W.F."/>
            <person name="Mammel M.K."/>
            <person name="McDermott P.F."/>
            <person name="Tartera C."/>
            <person name="White D.G."/>
            <person name="Leclerc J.E."/>
            <person name="Ravel J."/>
            <person name="Cebula T.A."/>
        </authorList>
    </citation>
    <scope>NUCLEOTIDE SEQUENCE [LARGE SCALE GENOMIC DNA]</scope>
    <source>
        <strain>CT_02021853</strain>
    </source>
</reference>
<feature type="chain" id="PRO_1000185972" description="3-ketoacyl-CoA thiolase">
    <location>
        <begin position="1"/>
        <end position="436"/>
    </location>
</feature>
<feature type="active site" description="Acyl-thioester intermediate" evidence="1">
    <location>
        <position position="99"/>
    </location>
</feature>
<feature type="active site" description="Proton acceptor" evidence="1">
    <location>
        <position position="392"/>
    </location>
</feature>
<feature type="active site" description="Proton acceptor" evidence="1">
    <location>
        <position position="422"/>
    </location>
</feature>
<evidence type="ECO:0000255" key="1">
    <source>
        <dbReference type="HAMAP-Rule" id="MF_01618"/>
    </source>
</evidence>
<keyword id="KW-0012">Acyltransferase</keyword>
<keyword id="KW-0963">Cytoplasm</keyword>
<keyword id="KW-0276">Fatty acid metabolism</keyword>
<keyword id="KW-0442">Lipid degradation</keyword>
<keyword id="KW-0443">Lipid metabolism</keyword>
<keyword id="KW-0808">Transferase</keyword>
<organism>
    <name type="scientific">Salmonella dublin (strain CT_02021853)</name>
    <dbReference type="NCBI Taxonomy" id="439851"/>
    <lineage>
        <taxon>Bacteria</taxon>
        <taxon>Pseudomonadati</taxon>
        <taxon>Pseudomonadota</taxon>
        <taxon>Gammaproteobacteria</taxon>
        <taxon>Enterobacterales</taxon>
        <taxon>Enterobacteriaceae</taxon>
        <taxon>Salmonella</taxon>
    </lineage>
</organism>
<comment type="function">
    <text evidence="1">Catalyzes the final step of fatty acid oxidation in which acetyl-CoA is released and the CoA ester of a fatty acid two carbons shorter is formed.</text>
</comment>
<comment type="catalytic activity">
    <reaction evidence="1">
        <text>an acyl-CoA + acetyl-CoA = a 3-oxoacyl-CoA + CoA</text>
        <dbReference type="Rhea" id="RHEA:21564"/>
        <dbReference type="ChEBI" id="CHEBI:57287"/>
        <dbReference type="ChEBI" id="CHEBI:57288"/>
        <dbReference type="ChEBI" id="CHEBI:58342"/>
        <dbReference type="ChEBI" id="CHEBI:90726"/>
        <dbReference type="EC" id="2.3.1.16"/>
    </reaction>
</comment>
<comment type="pathway">
    <text evidence="1">Lipid metabolism; fatty acid beta-oxidation.</text>
</comment>
<comment type="subunit">
    <text evidence="1">Heterotetramer of two alpha chains (FadJ) and two beta chains (FadI).</text>
</comment>
<comment type="subcellular location">
    <subcellularLocation>
        <location evidence="1">Cytoplasm</location>
    </subcellularLocation>
</comment>
<comment type="similarity">
    <text evidence="1">Belongs to the thiolase-like superfamily. Thiolase family.</text>
</comment>
<proteinExistence type="inferred from homology"/>
<name>FADI_SALDC</name>
<sequence>MRQALPLVTRQGDRIAIVSGLRTPFARQATAFHGIPAVDLGKMVVGELLARSEIPADAIEQLVFGQVVQMPEAPNIAREIVLGTGMNVHTDAYSVSRACATSFQAVANVAESLMAGTIRAGIAGGADSSSVLPIGVSKALARVLVDVNKARTTRQRLTLFSRLRLRDLLPVPPAVAEYSTGLRMGDTAEQMAKTYGITREQQDALAHRSHQRAAQAWAEGKLAEEVMTTYVPPYKNPFAEDNNIRGASTLADYAKLRPAFDRKHGSVTAANSTPLTDGAAAVIMMTESRAKELGLRPLGYLRSYAFTAIDVWQDMLLGPAWSTPLALERAGLTMADLTLFDMHEAFAAQTLANLQLLGSERFAREVLGRAQATGEVDDAKFNVLGGSIAYGHPFAATGARMITQTLHELRRRGGGFGLVTACAAGGLGAAMVLEAE</sequence>
<protein>
    <recommendedName>
        <fullName evidence="1">3-ketoacyl-CoA thiolase</fullName>
        <ecNumber evidence="1">2.3.1.16</ecNumber>
    </recommendedName>
    <alternativeName>
        <fullName evidence="1">ACSs</fullName>
    </alternativeName>
    <alternativeName>
        <fullName evidence="1">Acetyl-CoA acyltransferase</fullName>
    </alternativeName>
    <alternativeName>
        <fullName evidence="1">Acyl-CoA ligase</fullName>
    </alternativeName>
    <alternativeName>
        <fullName evidence="1">Beta-ketothiolase</fullName>
    </alternativeName>
    <alternativeName>
        <fullName evidence="1">Fatty acid oxidation complex subunit beta</fullName>
    </alternativeName>
</protein>
<dbReference type="EC" id="2.3.1.16" evidence="1"/>
<dbReference type="EMBL" id="CP001144">
    <property type="protein sequence ID" value="ACH76798.1"/>
    <property type="molecule type" value="Genomic_DNA"/>
</dbReference>
<dbReference type="RefSeq" id="WP_001248128.1">
    <property type="nucleotide sequence ID" value="NC_011205.1"/>
</dbReference>
<dbReference type="SMR" id="B5FPN2"/>
<dbReference type="KEGG" id="sed:SeD_A2743"/>
<dbReference type="HOGENOM" id="CLU_031026_2_0_6"/>
<dbReference type="UniPathway" id="UPA00659"/>
<dbReference type="Proteomes" id="UP000008322">
    <property type="component" value="Chromosome"/>
</dbReference>
<dbReference type="GO" id="GO:0005829">
    <property type="term" value="C:cytosol"/>
    <property type="evidence" value="ECO:0007669"/>
    <property type="project" value="TreeGrafter"/>
</dbReference>
<dbReference type="GO" id="GO:0003988">
    <property type="term" value="F:acetyl-CoA C-acyltransferase activity"/>
    <property type="evidence" value="ECO:0007669"/>
    <property type="project" value="UniProtKB-UniRule"/>
</dbReference>
<dbReference type="GO" id="GO:0006635">
    <property type="term" value="P:fatty acid beta-oxidation"/>
    <property type="evidence" value="ECO:0007669"/>
    <property type="project" value="UniProtKB-UniRule"/>
</dbReference>
<dbReference type="CDD" id="cd00751">
    <property type="entry name" value="thiolase"/>
    <property type="match status" value="1"/>
</dbReference>
<dbReference type="FunFam" id="3.40.47.10:FF:000011">
    <property type="entry name" value="3-ketoacyl-CoA thiolase"/>
    <property type="match status" value="1"/>
</dbReference>
<dbReference type="Gene3D" id="3.40.47.10">
    <property type="match status" value="1"/>
</dbReference>
<dbReference type="HAMAP" id="MF_01618">
    <property type="entry name" value="FadI"/>
    <property type="match status" value="1"/>
</dbReference>
<dbReference type="InterPro" id="IPR012806">
    <property type="entry name" value="Ac-CoA_C-AcTrfase_FadI"/>
</dbReference>
<dbReference type="InterPro" id="IPR002155">
    <property type="entry name" value="Thiolase"/>
</dbReference>
<dbReference type="InterPro" id="IPR016039">
    <property type="entry name" value="Thiolase-like"/>
</dbReference>
<dbReference type="InterPro" id="IPR020615">
    <property type="entry name" value="Thiolase_acyl_enz_int_AS"/>
</dbReference>
<dbReference type="InterPro" id="IPR020610">
    <property type="entry name" value="Thiolase_AS"/>
</dbReference>
<dbReference type="InterPro" id="IPR020617">
    <property type="entry name" value="Thiolase_C"/>
</dbReference>
<dbReference type="InterPro" id="IPR020613">
    <property type="entry name" value="Thiolase_CS"/>
</dbReference>
<dbReference type="InterPro" id="IPR020616">
    <property type="entry name" value="Thiolase_N"/>
</dbReference>
<dbReference type="NCBIfam" id="TIGR01930">
    <property type="entry name" value="AcCoA-C-Actrans"/>
    <property type="match status" value="1"/>
</dbReference>
<dbReference type="NCBIfam" id="TIGR02446">
    <property type="entry name" value="FadI"/>
    <property type="match status" value="1"/>
</dbReference>
<dbReference type="NCBIfam" id="NF006516">
    <property type="entry name" value="PRK08963.1"/>
    <property type="match status" value="1"/>
</dbReference>
<dbReference type="PANTHER" id="PTHR18919:SF107">
    <property type="entry name" value="ACETYL-COA ACETYLTRANSFERASE, CYTOSOLIC"/>
    <property type="match status" value="1"/>
</dbReference>
<dbReference type="PANTHER" id="PTHR18919">
    <property type="entry name" value="ACETYL-COA C-ACYLTRANSFERASE"/>
    <property type="match status" value="1"/>
</dbReference>
<dbReference type="Pfam" id="PF02803">
    <property type="entry name" value="Thiolase_C"/>
    <property type="match status" value="1"/>
</dbReference>
<dbReference type="Pfam" id="PF00108">
    <property type="entry name" value="Thiolase_N"/>
    <property type="match status" value="1"/>
</dbReference>
<dbReference type="PIRSF" id="PIRSF000429">
    <property type="entry name" value="Ac-CoA_Ac_transf"/>
    <property type="match status" value="1"/>
</dbReference>
<dbReference type="SUPFAM" id="SSF53901">
    <property type="entry name" value="Thiolase-like"/>
    <property type="match status" value="2"/>
</dbReference>
<dbReference type="PROSITE" id="PS00098">
    <property type="entry name" value="THIOLASE_1"/>
    <property type="match status" value="1"/>
</dbReference>
<dbReference type="PROSITE" id="PS00737">
    <property type="entry name" value="THIOLASE_2"/>
    <property type="match status" value="1"/>
</dbReference>
<dbReference type="PROSITE" id="PS00099">
    <property type="entry name" value="THIOLASE_3"/>
    <property type="match status" value="1"/>
</dbReference>
<gene>
    <name evidence="1" type="primary">fadI</name>
    <name type="ordered locus">SeD_A2743</name>
</gene>